<feature type="chain" id="PRO_1000004603" description="Glutamyl-tRNA reductase">
    <location>
        <begin position="1"/>
        <end position="394"/>
    </location>
</feature>
<feature type="active site" description="Nucleophile" evidence="1">
    <location>
        <position position="46"/>
    </location>
</feature>
<feature type="binding site" evidence="1">
    <location>
        <begin position="45"/>
        <end position="48"/>
    </location>
    <ligand>
        <name>substrate</name>
    </ligand>
</feature>
<feature type="binding site" evidence="1">
    <location>
        <position position="99"/>
    </location>
    <ligand>
        <name>substrate</name>
    </ligand>
</feature>
<feature type="binding site" evidence="1">
    <location>
        <begin position="104"/>
        <end position="106"/>
    </location>
    <ligand>
        <name>substrate</name>
    </ligand>
</feature>
<feature type="binding site" evidence="1">
    <location>
        <position position="110"/>
    </location>
    <ligand>
        <name>substrate</name>
    </ligand>
</feature>
<feature type="binding site" evidence="1">
    <location>
        <begin position="175"/>
        <end position="180"/>
    </location>
    <ligand>
        <name>NADP(+)</name>
        <dbReference type="ChEBI" id="CHEBI:58349"/>
    </ligand>
</feature>
<feature type="site" description="Important for activity" evidence="1">
    <location>
        <position position="89"/>
    </location>
</feature>
<proteinExistence type="inferred from homology"/>
<accession>A4XK04</accession>
<organism>
    <name type="scientific">Caldicellulosiruptor saccharolyticus (strain ATCC 43494 / DSM 8903 / Tp8T 6331)</name>
    <dbReference type="NCBI Taxonomy" id="351627"/>
    <lineage>
        <taxon>Bacteria</taxon>
        <taxon>Bacillati</taxon>
        <taxon>Bacillota</taxon>
        <taxon>Bacillota incertae sedis</taxon>
        <taxon>Caldicellulosiruptorales</taxon>
        <taxon>Caldicellulosiruptoraceae</taxon>
        <taxon>Caldicellulosiruptor</taxon>
    </lineage>
</organism>
<sequence>MLWVIGINHKVEVDIRQKFSLTKTKLQEKLISLKKLADEVIILSTCNRTEIYFFSEEYVDIEKIFTELDWDRRYMPLFYIYKDKDCIKHLFEVVCGFDSLLIGEEQIVAQVKEAKDIAKQVGGKNPVLERLFEVALKCSKEFRTKARLNEHPITIASVVGKVLKESNIRKIAIIGLGNIGFLFCNYFKNSDVDKVFLIGRKNERIDQFVKLYPGKFEYSDKKDAISEAQCLICSTSAPHAVVHKDDIPDGKNLLIFDLAVPRDVDVEVYKLPNVKVIDIDQVHKMDATSREIRISKMQENYNIIEKYIDEFIEWLGFRQYRNLIIEVKRHAEQLCKAQVKYLKNVDSREREEVERLLIRMANLYIDRAIEVLREAHKEGSGEICSNLIKRIFLK</sequence>
<gene>
    <name evidence="1" type="primary">hemA</name>
    <name type="ordered locus">Csac_1649</name>
</gene>
<reference key="1">
    <citation type="submission" date="2007-04" db="EMBL/GenBank/DDBJ databases">
        <title>Genome sequence of the thermophilic hydrogen-producing bacterium Caldicellulosiruptor saccharolyticus DSM 8903.</title>
        <authorList>
            <person name="Copeland A."/>
            <person name="Lucas S."/>
            <person name="Lapidus A."/>
            <person name="Barry K."/>
            <person name="Detter J.C."/>
            <person name="Glavina del Rio T."/>
            <person name="Hammon N."/>
            <person name="Israni S."/>
            <person name="Dalin E."/>
            <person name="Tice H."/>
            <person name="Pitluck S."/>
            <person name="Kiss H."/>
            <person name="Brettin T."/>
            <person name="Bruce D."/>
            <person name="Han C."/>
            <person name="Schmutz J."/>
            <person name="Larimer F."/>
            <person name="Land M."/>
            <person name="Hauser L."/>
            <person name="Kyrpides N."/>
            <person name="Lykidis A."/>
            <person name="van de Werken H.J.G."/>
            <person name="Verhaart M.R.A."/>
            <person name="VanFossen A.L."/>
            <person name="Lewis D.L."/>
            <person name="Nichols J.D."/>
            <person name="Goorissen H.P."/>
            <person name="van Niel E.W.J."/>
            <person name="Stams F.J.M."/>
            <person name="Willquist K.U."/>
            <person name="Ward D.E."/>
            <person name="van der Oost J."/>
            <person name="Kelly R.M."/>
            <person name="Kengen S.M.W."/>
            <person name="Richardson P."/>
        </authorList>
    </citation>
    <scope>NUCLEOTIDE SEQUENCE [LARGE SCALE GENOMIC DNA]</scope>
    <source>
        <strain>ATCC 43494 / DSM 8903 / Tp8T 6331</strain>
    </source>
</reference>
<protein>
    <recommendedName>
        <fullName evidence="1">Glutamyl-tRNA reductase</fullName>
        <shortName evidence="1">GluTR</shortName>
        <ecNumber evidence="1">1.2.1.70</ecNumber>
    </recommendedName>
</protein>
<comment type="function">
    <text evidence="1">Catalyzes the NADPH-dependent reduction of glutamyl-tRNA(Glu) to glutamate 1-semialdehyde (GSA).</text>
</comment>
<comment type="catalytic activity">
    <reaction evidence="1">
        <text>(S)-4-amino-5-oxopentanoate + tRNA(Glu) + NADP(+) = L-glutamyl-tRNA(Glu) + NADPH + H(+)</text>
        <dbReference type="Rhea" id="RHEA:12344"/>
        <dbReference type="Rhea" id="RHEA-COMP:9663"/>
        <dbReference type="Rhea" id="RHEA-COMP:9680"/>
        <dbReference type="ChEBI" id="CHEBI:15378"/>
        <dbReference type="ChEBI" id="CHEBI:57501"/>
        <dbReference type="ChEBI" id="CHEBI:57783"/>
        <dbReference type="ChEBI" id="CHEBI:58349"/>
        <dbReference type="ChEBI" id="CHEBI:78442"/>
        <dbReference type="ChEBI" id="CHEBI:78520"/>
        <dbReference type="EC" id="1.2.1.70"/>
    </reaction>
</comment>
<comment type="pathway">
    <text evidence="1">Porphyrin-containing compound metabolism; protoporphyrin-IX biosynthesis; 5-aminolevulinate from L-glutamyl-tRNA(Glu): step 1/2.</text>
</comment>
<comment type="subunit">
    <text evidence="1">Homodimer.</text>
</comment>
<comment type="domain">
    <text evidence="1">Possesses an unusual extended V-shaped dimeric structure with each monomer consisting of three distinct domains arranged along a curved 'spinal' alpha-helix. The N-terminal catalytic domain specifically recognizes the glutamate moiety of the substrate. The second domain is the NADPH-binding domain, and the third C-terminal domain is responsible for dimerization.</text>
</comment>
<comment type="miscellaneous">
    <text evidence="1">During catalysis, the active site Cys acts as a nucleophile attacking the alpha-carbonyl group of tRNA-bound glutamate with the formation of a thioester intermediate between enzyme and glutamate, and the concomitant release of tRNA(Glu). The thioester intermediate is finally reduced by direct hydride transfer from NADPH, to form the product GSA.</text>
</comment>
<comment type="similarity">
    <text evidence="1">Belongs to the glutamyl-tRNA reductase family.</text>
</comment>
<name>HEM1_CALS8</name>
<dbReference type="EC" id="1.2.1.70" evidence="1"/>
<dbReference type="EMBL" id="CP000679">
    <property type="protein sequence ID" value="ABP67239.1"/>
    <property type="molecule type" value="Genomic_DNA"/>
</dbReference>
<dbReference type="RefSeq" id="WP_011917174.1">
    <property type="nucleotide sequence ID" value="NC_009437.1"/>
</dbReference>
<dbReference type="SMR" id="A4XK04"/>
<dbReference type="STRING" id="351627.Csac_1649"/>
<dbReference type="KEGG" id="csc:Csac_1649"/>
<dbReference type="eggNOG" id="COG0373">
    <property type="taxonomic scope" value="Bacteria"/>
</dbReference>
<dbReference type="HOGENOM" id="CLU_035113_2_2_9"/>
<dbReference type="OrthoDB" id="110209at2"/>
<dbReference type="UniPathway" id="UPA00251">
    <property type="reaction ID" value="UER00316"/>
</dbReference>
<dbReference type="Proteomes" id="UP000000256">
    <property type="component" value="Chromosome"/>
</dbReference>
<dbReference type="GO" id="GO:0008883">
    <property type="term" value="F:glutamyl-tRNA reductase activity"/>
    <property type="evidence" value="ECO:0007669"/>
    <property type="project" value="UniProtKB-UniRule"/>
</dbReference>
<dbReference type="GO" id="GO:0050661">
    <property type="term" value="F:NADP binding"/>
    <property type="evidence" value="ECO:0007669"/>
    <property type="project" value="InterPro"/>
</dbReference>
<dbReference type="GO" id="GO:0019353">
    <property type="term" value="P:protoporphyrinogen IX biosynthetic process from glutamate"/>
    <property type="evidence" value="ECO:0007669"/>
    <property type="project" value="TreeGrafter"/>
</dbReference>
<dbReference type="Gene3D" id="3.30.460.30">
    <property type="entry name" value="Glutamyl-tRNA reductase, N-terminal domain"/>
    <property type="match status" value="1"/>
</dbReference>
<dbReference type="Gene3D" id="3.40.50.720">
    <property type="entry name" value="NAD(P)-binding Rossmann-like Domain"/>
    <property type="match status" value="1"/>
</dbReference>
<dbReference type="HAMAP" id="MF_00087">
    <property type="entry name" value="Glu_tRNA_reductase"/>
    <property type="match status" value="1"/>
</dbReference>
<dbReference type="InterPro" id="IPR000343">
    <property type="entry name" value="4pyrrol_synth_GluRdtase"/>
</dbReference>
<dbReference type="InterPro" id="IPR015896">
    <property type="entry name" value="4pyrrol_synth_GluRdtase_dimer"/>
</dbReference>
<dbReference type="InterPro" id="IPR015895">
    <property type="entry name" value="4pyrrol_synth_GluRdtase_N"/>
</dbReference>
<dbReference type="InterPro" id="IPR018214">
    <property type="entry name" value="GluRdtase_CS"/>
</dbReference>
<dbReference type="InterPro" id="IPR036453">
    <property type="entry name" value="GluRdtase_dimer_dom_sf"/>
</dbReference>
<dbReference type="InterPro" id="IPR036343">
    <property type="entry name" value="GluRdtase_N_sf"/>
</dbReference>
<dbReference type="InterPro" id="IPR036291">
    <property type="entry name" value="NAD(P)-bd_dom_sf"/>
</dbReference>
<dbReference type="InterPro" id="IPR006151">
    <property type="entry name" value="Shikm_DH/Glu-tRNA_Rdtase"/>
</dbReference>
<dbReference type="NCBIfam" id="TIGR01035">
    <property type="entry name" value="hemA"/>
    <property type="match status" value="1"/>
</dbReference>
<dbReference type="PANTHER" id="PTHR43013">
    <property type="entry name" value="GLUTAMYL-TRNA REDUCTASE"/>
    <property type="match status" value="1"/>
</dbReference>
<dbReference type="PANTHER" id="PTHR43013:SF1">
    <property type="entry name" value="GLUTAMYL-TRNA REDUCTASE"/>
    <property type="match status" value="1"/>
</dbReference>
<dbReference type="Pfam" id="PF00745">
    <property type="entry name" value="GlutR_dimer"/>
    <property type="match status" value="1"/>
</dbReference>
<dbReference type="Pfam" id="PF05201">
    <property type="entry name" value="GlutR_N"/>
    <property type="match status" value="1"/>
</dbReference>
<dbReference type="Pfam" id="PF01488">
    <property type="entry name" value="Shikimate_DH"/>
    <property type="match status" value="1"/>
</dbReference>
<dbReference type="PIRSF" id="PIRSF000445">
    <property type="entry name" value="4pyrrol_synth_GluRdtase"/>
    <property type="match status" value="1"/>
</dbReference>
<dbReference type="SUPFAM" id="SSF69742">
    <property type="entry name" value="Glutamyl tRNA-reductase catalytic, N-terminal domain"/>
    <property type="match status" value="1"/>
</dbReference>
<dbReference type="SUPFAM" id="SSF69075">
    <property type="entry name" value="Glutamyl tRNA-reductase dimerization domain"/>
    <property type="match status" value="1"/>
</dbReference>
<dbReference type="SUPFAM" id="SSF51735">
    <property type="entry name" value="NAD(P)-binding Rossmann-fold domains"/>
    <property type="match status" value="1"/>
</dbReference>
<dbReference type="PROSITE" id="PS00747">
    <property type="entry name" value="GLUTR"/>
    <property type="match status" value="1"/>
</dbReference>
<keyword id="KW-0521">NADP</keyword>
<keyword id="KW-0560">Oxidoreductase</keyword>
<keyword id="KW-0627">Porphyrin biosynthesis</keyword>
<evidence type="ECO:0000255" key="1">
    <source>
        <dbReference type="HAMAP-Rule" id="MF_00087"/>
    </source>
</evidence>